<accession>A4XKW9</accession>
<comment type="function">
    <text evidence="1">Produces ATP from ADP in the presence of a proton gradient across the membrane.</text>
</comment>
<comment type="subunit">
    <text evidence="1">F-type ATPases have 2 components, CF(1) - the catalytic core - and CF(0) - the membrane proton channel. CF(1) has five subunits: alpha(3), beta(3), gamma(1), delta(1), epsilon(1). CF(0) has three main subunits: a, b and c.</text>
</comment>
<comment type="subcellular location">
    <subcellularLocation>
        <location evidence="1">Cell membrane</location>
        <topology evidence="1">Peripheral membrane protein</topology>
    </subcellularLocation>
</comment>
<comment type="similarity">
    <text evidence="1">Belongs to the ATPase epsilon chain family.</text>
</comment>
<sequence length="137" mass="15705">MAEFELEVLQPERIFFKDKVEMIVVRAIDGEIGIMAGHEPIVTPIGIGKLRIKKGGKWREAAIAGGILEVNQNKVVILSDAVEWPEEIDRQRALAAKERAEKKLQQKLPPDEFERYQAALYRAINRLRMIEERRNGD</sequence>
<proteinExistence type="inferred from homology"/>
<keyword id="KW-0066">ATP synthesis</keyword>
<keyword id="KW-1003">Cell membrane</keyword>
<keyword id="KW-0139">CF(1)</keyword>
<keyword id="KW-0375">Hydrogen ion transport</keyword>
<keyword id="KW-0406">Ion transport</keyword>
<keyword id="KW-0472">Membrane</keyword>
<keyword id="KW-0813">Transport</keyword>
<name>ATPE_CALS8</name>
<gene>
    <name evidence="1" type="primary">atpC</name>
    <name type="ordered locus">Csac_1969</name>
</gene>
<evidence type="ECO:0000255" key="1">
    <source>
        <dbReference type="HAMAP-Rule" id="MF_00530"/>
    </source>
</evidence>
<reference key="1">
    <citation type="submission" date="2007-04" db="EMBL/GenBank/DDBJ databases">
        <title>Genome sequence of the thermophilic hydrogen-producing bacterium Caldicellulosiruptor saccharolyticus DSM 8903.</title>
        <authorList>
            <person name="Copeland A."/>
            <person name="Lucas S."/>
            <person name="Lapidus A."/>
            <person name="Barry K."/>
            <person name="Detter J.C."/>
            <person name="Glavina del Rio T."/>
            <person name="Hammon N."/>
            <person name="Israni S."/>
            <person name="Dalin E."/>
            <person name="Tice H."/>
            <person name="Pitluck S."/>
            <person name="Kiss H."/>
            <person name="Brettin T."/>
            <person name="Bruce D."/>
            <person name="Han C."/>
            <person name="Schmutz J."/>
            <person name="Larimer F."/>
            <person name="Land M."/>
            <person name="Hauser L."/>
            <person name="Kyrpides N."/>
            <person name="Lykidis A."/>
            <person name="van de Werken H.J.G."/>
            <person name="Verhaart M.R.A."/>
            <person name="VanFossen A.L."/>
            <person name="Lewis D.L."/>
            <person name="Nichols J.D."/>
            <person name="Goorissen H.P."/>
            <person name="van Niel E.W.J."/>
            <person name="Stams F.J.M."/>
            <person name="Willquist K.U."/>
            <person name="Ward D.E."/>
            <person name="van der Oost J."/>
            <person name="Kelly R.M."/>
            <person name="Kengen S.M.W."/>
            <person name="Richardson P."/>
        </authorList>
    </citation>
    <scope>NUCLEOTIDE SEQUENCE [LARGE SCALE GENOMIC DNA]</scope>
    <source>
        <strain>ATCC 43494 / DSM 8903 / Tp8T 6331</strain>
    </source>
</reference>
<feature type="chain" id="PRO_1000056465" description="ATP synthase epsilon chain">
    <location>
        <begin position="1"/>
        <end position="137"/>
    </location>
</feature>
<protein>
    <recommendedName>
        <fullName evidence="1">ATP synthase epsilon chain</fullName>
    </recommendedName>
    <alternativeName>
        <fullName evidence="1">ATP synthase F1 sector epsilon subunit</fullName>
    </alternativeName>
    <alternativeName>
        <fullName evidence="1">F-ATPase epsilon subunit</fullName>
    </alternativeName>
</protein>
<organism>
    <name type="scientific">Caldicellulosiruptor saccharolyticus (strain ATCC 43494 / DSM 8903 / Tp8T 6331)</name>
    <dbReference type="NCBI Taxonomy" id="351627"/>
    <lineage>
        <taxon>Bacteria</taxon>
        <taxon>Bacillati</taxon>
        <taxon>Bacillota</taxon>
        <taxon>Bacillota incertae sedis</taxon>
        <taxon>Caldicellulosiruptorales</taxon>
        <taxon>Caldicellulosiruptoraceae</taxon>
        <taxon>Caldicellulosiruptor</taxon>
    </lineage>
</organism>
<dbReference type="EMBL" id="CP000679">
    <property type="protein sequence ID" value="ABP67554.1"/>
    <property type="molecule type" value="Genomic_DNA"/>
</dbReference>
<dbReference type="RefSeq" id="WP_011917490.1">
    <property type="nucleotide sequence ID" value="NC_009437.1"/>
</dbReference>
<dbReference type="SMR" id="A4XKW9"/>
<dbReference type="STRING" id="351627.Csac_1969"/>
<dbReference type="KEGG" id="csc:Csac_1969"/>
<dbReference type="eggNOG" id="COG0355">
    <property type="taxonomic scope" value="Bacteria"/>
</dbReference>
<dbReference type="HOGENOM" id="CLU_084338_1_3_9"/>
<dbReference type="OrthoDB" id="9804110at2"/>
<dbReference type="Proteomes" id="UP000000256">
    <property type="component" value="Chromosome"/>
</dbReference>
<dbReference type="GO" id="GO:0005886">
    <property type="term" value="C:plasma membrane"/>
    <property type="evidence" value="ECO:0007669"/>
    <property type="project" value="UniProtKB-SubCell"/>
</dbReference>
<dbReference type="GO" id="GO:0045259">
    <property type="term" value="C:proton-transporting ATP synthase complex"/>
    <property type="evidence" value="ECO:0007669"/>
    <property type="project" value="UniProtKB-KW"/>
</dbReference>
<dbReference type="GO" id="GO:0005524">
    <property type="term" value="F:ATP binding"/>
    <property type="evidence" value="ECO:0007669"/>
    <property type="project" value="UniProtKB-UniRule"/>
</dbReference>
<dbReference type="GO" id="GO:0046933">
    <property type="term" value="F:proton-transporting ATP synthase activity, rotational mechanism"/>
    <property type="evidence" value="ECO:0007669"/>
    <property type="project" value="UniProtKB-UniRule"/>
</dbReference>
<dbReference type="CDD" id="cd12152">
    <property type="entry name" value="F1-ATPase_delta"/>
    <property type="match status" value="1"/>
</dbReference>
<dbReference type="Gene3D" id="1.20.5.440">
    <property type="entry name" value="ATP synthase delta/epsilon subunit, C-terminal domain"/>
    <property type="match status" value="1"/>
</dbReference>
<dbReference type="Gene3D" id="2.60.15.10">
    <property type="entry name" value="F0F1 ATP synthase delta/epsilon subunit, N-terminal"/>
    <property type="match status" value="1"/>
</dbReference>
<dbReference type="HAMAP" id="MF_00530">
    <property type="entry name" value="ATP_synth_epsil_bac"/>
    <property type="match status" value="1"/>
</dbReference>
<dbReference type="InterPro" id="IPR036794">
    <property type="entry name" value="ATP_F1_dsu/esu_C_sf"/>
</dbReference>
<dbReference type="InterPro" id="IPR001469">
    <property type="entry name" value="ATP_synth_F1_dsu/esu"/>
</dbReference>
<dbReference type="InterPro" id="IPR020546">
    <property type="entry name" value="ATP_synth_F1_dsu/esu_N"/>
</dbReference>
<dbReference type="InterPro" id="IPR020547">
    <property type="entry name" value="ATP_synth_F1_esu_C"/>
</dbReference>
<dbReference type="InterPro" id="IPR036771">
    <property type="entry name" value="ATPsynth_dsu/esu_N"/>
</dbReference>
<dbReference type="NCBIfam" id="TIGR01216">
    <property type="entry name" value="ATP_synt_epsi"/>
    <property type="match status" value="1"/>
</dbReference>
<dbReference type="PANTHER" id="PTHR13822">
    <property type="entry name" value="ATP SYNTHASE DELTA/EPSILON CHAIN"/>
    <property type="match status" value="1"/>
</dbReference>
<dbReference type="PANTHER" id="PTHR13822:SF10">
    <property type="entry name" value="ATP SYNTHASE EPSILON CHAIN, CHLOROPLASTIC"/>
    <property type="match status" value="1"/>
</dbReference>
<dbReference type="Pfam" id="PF00401">
    <property type="entry name" value="ATP-synt_DE"/>
    <property type="match status" value="1"/>
</dbReference>
<dbReference type="Pfam" id="PF02823">
    <property type="entry name" value="ATP-synt_DE_N"/>
    <property type="match status" value="1"/>
</dbReference>
<dbReference type="SUPFAM" id="SSF46604">
    <property type="entry name" value="Epsilon subunit of F1F0-ATP synthase C-terminal domain"/>
    <property type="match status" value="1"/>
</dbReference>
<dbReference type="SUPFAM" id="SSF51344">
    <property type="entry name" value="Epsilon subunit of F1F0-ATP synthase N-terminal domain"/>
    <property type="match status" value="1"/>
</dbReference>